<keyword id="KW-0963">Cytoplasm</keyword>
<keyword id="KW-0444">Lipid biosynthesis</keyword>
<keyword id="KW-0443">Lipid metabolism</keyword>
<keyword id="KW-0594">Phospholipid biosynthesis</keyword>
<keyword id="KW-1208">Phospholipid metabolism</keyword>
<keyword id="KW-0808">Transferase</keyword>
<feature type="chain" id="PRO_1000001808" description="Phosphate acyltransferase">
    <location>
        <begin position="1"/>
        <end position="358"/>
    </location>
</feature>
<feature type="region of interest" description="Disordered" evidence="2">
    <location>
        <begin position="336"/>
        <end position="358"/>
    </location>
</feature>
<gene>
    <name evidence="1" type="primary">plsX</name>
    <name type="ordered locus">Reut_A2266</name>
</gene>
<name>PLSX_CUPPJ</name>
<evidence type="ECO:0000255" key="1">
    <source>
        <dbReference type="HAMAP-Rule" id="MF_00019"/>
    </source>
</evidence>
<evidence type="ECO:0000256" key="2">
    <source>
        <dbReference type="SAM" id="MobiDB-lite"/>
    </source>
</evidence>
<reference key="1">
    <citation type="journal article" date="2010" name="PLoS ONE">
        <title>The complete multipartite genome sequence of Cupriavidus necator JMP134, a versatile pollutant degrader.</title>
        <authorList>
            <person name="Lykidis A."/>
            <person name="Perez-Pantoja D."/>
            <person name="Ledger T."/>
            <person name="Mavromatis K."/>
            <person name="Anderson I.J."/>
            <person name="Ivanova N.N."/>
            <person name="Hooper S.D."/>
            <person name="Lapidus A."/>
            <person name="Lucas S."/>
            <person name="Gonzalez B."/>
            <person name="Kyrpides N.C."/>
        </authorList>
    </citation>
    <scope>NUCLEOTIDE SEQUENCE [LARGE SCALE GENOMIC DNA]</scope>
    <source>
        <strain>JMP134 / LMG 1197</strain>
    </source>
</reference>
<accession>Q46Z04</accession>
<organism>
    <name type="scientific">Cupriavidus pinatubonensis (strain JMP 134 / LMG 1197)</name>
    <name type="common">Cupriavidus necator (strain JMP 134)</name>
    <dbReference type="NCBI Taxonomy" id="264198"/>
    <lineage>
        <taxon>Bacteria</taxon>
        <taxon>Pseudomonadati</taxon>
        <taxon>Pseudomonadota</taxon>
        <taxon>Betaproteobacteria</taxon>
        <taxon>Burkholderiales</taxon>
        <taxon>Burkholderiaceae</taxon>
        <taxon>Cupriavidus</taxon>
    </lineage>
</organism>
<comment type="function">
    <text evidence="1">Catalyzes the reversible formation of acyl-phosphate (acyl-PO(4)) from acyl-[acyl-carrier-protein] (acyl-ACP). This enzyme utilizes acyl-ACP as fatty acyl donor, but not acyl-CoA.</text>
</comment>
<comment type="catalytic activity">
    <reaction evidence="1">
        <text>a fatty acyl-[ACP] + phosphate = an acyl phosphate + holo-[ACP]</text>
        <dbReference type="Rhea" id="RHEA:42292"/>
        <dbReference type="Rhea" id="RHEA-COMP:9685"/>
        <dbReference type="Rhea" id="RHEA-COMP:14125"/>
        <dbReference type="ChEBI" id="CHEBI:43474"/>
        <dbReference type="ChEBI" id="CHEBI:59918"/>
        <dbReference type="ChEBI" id="CHEBI:64479"/>
        <dbReference type="ChEBI" id="CHEBI:138651"/>
        <dbReference type="EC" id="2.3.1.274"/>
    </reaction>
</comment>
<comment type="pathway">
    <text evidence="1">Lipid metabolism; phospholipid metabolism.</text>
</comment>
<comment type="subunit">
    <text evidence="1">Homodimer. Probably interacts with PlsY.</text>
</comment>
<comment type="subcellular location">
    <subcellularLocation>
        <location evidence="1">Cytoplasm</location>
    </subcellularLocation>
    <text evidence="1">Associated with the membrane possibly through PlsY.</text>
</comment>
<comment type="similarity">
    <text evidence="1">Belongs to the PlsX family.</text>
</comment>
<dbReference type="EC" id="2.3.1.274" evidence="1"/>
<dbReference type="EMBL" id="CP000090">
    <property type="protein sequence ID" value="AAZ61629.1"/>
    <property type="molecule type" value="Genomic_DNA"/>
</dbReference>
<dbReference type="SMR" id="Q46Z04"/>
<dbReference type="STRING" id="264198.Reut_A2266"/>
<dbReference type="KEGG" id="reu:Reut_A2266"/>
<dbReference type="eggNOG" id="COG0416">
    <property type="taxonomic scope" value="Bacteria"/>
</dbReference>
<dbReference type="HOGENOM" id="CLU_039379_1_0_4"/>
<dbReference type="OrthoDB" id="9806408at2"/>
<dbReference type="UniPathway" id="UPA00085"/>
<dbReference type="GO" id="GO:0005737">
    <property type="term" value="C:cytoplasm"/>
    <property type="evidence" value="ECO:0007669"/>
    <property type="project" value="UniProtKB-SubCell"/>
</dbReference>
<dbReference type="GO" id="GO:0043811">
    <property type="term" value="F:phosphate:acyl-[acyl carrier protein] acyltransferase activity"/>
    <property type="evidence" value="ECO:0007669"/>
    <property type="project" value="UniProtKB-UniRule"/>
</dbReference>
<dbReference type="GO" id="GO:0006633">
    <property type="term" value="P:fatty acid biosynthetic process"/>
    <property type="evidence" value="ECO:0007669"/>
    <property type="project" value="UniProtKB-UniRule"/>
</dbReference>
<dbReference type="GO" id="GO:0008654">
    <property type="term" value="P:phospholipid biosynthetic process"/>
    <property type="evidence" value="ECO:0007669"/>
    <property type="project" value="UniProtKB-KW"/>
</dbReference>
<dbReference type="Gene3D" id="3.40.718.10">
    <property type="entry name" value="Isopropylmalate Dehydrogenase"/>
    <property type="match status" value="1"/>
</dbReference>
<dbReference type="HAMAP" id="MF_00019">
    <property type="entry name" value="PlsX"/>
    <property type="match status" value="1"/>
</dbReference>
<dbReference type="InterPro" id="IPR003664">
    <property type="entry name" value="FA_synthesis"/>
</dbReference>
<dbReference type="InterPro" id="IPR012281">
    <property type="entry name" value="Phospholipid_synth_PlsX-like"/>
</dbReference>
<dbReference type="NCBIfam" id="TIGR00182">
    <property type="entry name" value="plsX"/>
    <property type="match status" value="1"/>
</dbReference>
<dbReference type="PANTHER" id="PTHR30100">
    <property type="entry name" value="FATTY ACID/PHOSPHOLIPID SYNTHESIS PROTEIN PLSX"/>
    <property type="match status" value="1"/>
</dbReference>
<dbReference type="PANTHER" id="PTHR30100:SF1">
    <property type="entry name" value="PHOSPHATE ACYLTRANSFERASE"/>
    <property type="match status" value="1"/>
</dbReference>
<dbReference type="Pfam" id="PF02504">
    <property type="entry name" value="FA_synthesis"/>
    <property type="match status" value="1"/>
</dbReference>
<dbReference type="PIRSF" id="PIRSF002465">
    <property type="entry name" value="Phsphlp_syn_PlsX"/>
    <property type="match status" value="1"/>
</dbReference>
<dbReference type="SUPFAM" id="SSF53659">
    <property type="entry name" value="Isocitrate/Isopropylmalate dehydrogenase-like"/>
    <property type="match status" value="1"/>
</dbReference>
<protein>
    <recommendedName>
        <fullName evidence="1">Phosphate acyltransferase</fullName>
        <ecNumber evidence="1">2.3.1.274</ecNumber>
    </recommendedName>
    <alternativeName>
        <fullName evidence="1">Acyl-ACP phosphotransacylase</fullName>
    </alternativeName>
    <alternativeName>
        <fullName evidence="1">Acyl-[acyl-carrier-protein]--phosphate acyltransferase</fullName>
    </alternativeName>
    <alternativeName>
        <fullName evidence="1">Phosphate-acyl-ACP acyltransferase</fullName>
    </alternativeName>
</protein>
<proteinExistence type="inferred from homology"/>
<sequence>MTIKIAIDCMGGDHGVSVTVPAAISFLASHDDAAVVLVGLPDAIQAQLKKLRAQDHPRVSVVPATEVITMDDPVEVALRKKKDSSMRVAVTQVKEGLAGACISAGNTGALMAVSRYVLKTLEGIERPAIATTIPNEQGWGTTVLDLGANADCEPEHLLQFARMAEAMVAVVDHKEHPTVGLLNIGEEVIKGNEVVKRAGELLRASELNFHGNVEGNDIFKGTTDIVVCDGFVGNVALKSTEGLAKMIGGMIKEEFTRSWFTKLLAGIAMPVLSRLAKRLDPARYNGASLLGLRGLVIKSHGSADAHSFEWAIKRGYDAAKNGVIERIARAFADKTSAAGAAPASPETAPTPHPSTRAA</sequence>